<name>SYT8_HUMAN</name>
<reference key="1">
    <citation type="journal article" date="2007" name="BMC Genomics">
        <title>The full-ORF clone resource of the German cDNA consortium.</title>
        <authorList>
            <person name="Bechtel S."/>
            <person name="Rosenfelder H."/>
            <person name="Duda A."/>
            <person name="Schmidt C.P."/>
            <person name="Ernst U."/>
            <person name="Wellenreuther R."/>
            <person name="Mehrle A."/>
            <person name="Schuster C."/>
            <person name="Bahr A."/>
            <person name="Bloecker H."/>
            <person name="Heubner D."/>
            <person name="Hoerlein A."/>
            <person name="Michel G."/>
            <person name="Wedler H."/>
            <person name="Koehrer K."/>
            <person name="Ottenwaelder B."/>
            <person name="Poustka A."/>
            <person name="Wiemann S."/>
            <person name="Schupp I."/>
        </authorList>
    </citation>
    <scope>NUCLEOTIDE SEQUENCE [LARGE SCALE MRNA] (ISOFORM 1)</scope>
    <scope>VARIANT ARG-106</scope>
    <source>
        <tissue>Testis</tissue>
    </source>
</reference>
<reference key="2">
    <citation type="journal article" date="2004" name="Nat. Genet.">
        <title>Complete sequencing and characterization of 21,243 full-length human cDNAs.</title>
        <authorList>
            <person name="Ota T."/>
            <person name="Suzuki Y."/>
            <person name="Nishikawa T."/>
            <person name="Otsuki T."/>
            <person name="Sugiyama T."/>
            <person name="Irie R."/>
            <person name="Wakamatsu A."/>
            <person name="Hayashi K."/>
            <person name="Sato H."/>
            <person name="Nagai K."/>
            <person name="Kimura K."/>
            <person name="Makita H."/>
            <person name="Sekine M."/>
            <person name="Obayashi M."/>
            <person name="Nishi T."/>
            <person name="Shibahara T."/>
            <person name="Tanaka T."/>
            <person name="Ishii S."/>
            <person name="Yamamoto J."/>
            <person name="Saito K."/>
            <person name="Kawai Y."/>
            <person name="Isono Y."/>
            <person name="Nakamura Y."/>
            <person name="Nagahari K."/>
            <person name="Murakami K."/>
            <person name="Yasuda T."/>
            <person name="Iwayanagi T."/>
            <person name="Wagatsuma M."/>
            <person name="Shiratori A."/>
            <person name="Sudo H."/>
            <person name="Hosoiri T."/>
            <person name="Kaku Y."/>
            <person name="Kodaira H."/>
            <person name="Kondo H."/>
            <person name="Sugawara M."/>
            <person name="Takahashi M."/>
            <person name="Kanda K."/>
            <person name="Yokoi T."/>
            <person name="Furuya T."/>
            <person name="Kikkawa E."/>
            <person name="Omura Y."/>
            <person name="Abe K."/>
            <person name="Kamihara K."/>
            <person name="Katsuta N."/>
            <person name="Sato K."/>
            <person name="Tanikawa M."/>
            <person name="Yamazaki M."/>
            <person name="Ninomiya K."/>
            <person name="Ishibashi T."/>
            <person name="Yamashita H."/>
            <person name="Murakawa K."/>
            <person name="Fujimori K."/>
            <person name="Tanai H."/>
            <person name="Kimata M."/>
            <person name="Watanabe M."/>
            <person name="Hiraoka S."/>
            <person name="Chiba Y."/>
            <person name="Ishida S."/>
            <person name="Ono Y."/>
            <person name="Takiguchi S."/>
            <person name="Watanabe S."/>
            <person name="Yosida M."/>
            <person name="Hotuta T."/>
            <person name="Kusano J."/>
            <person name="Kanehori K."/>
            <person name="Takahashi-Fujii A."/>
            <person name="Hara H."/>
            <person name="Tanase T.-O."/>
            <person name="Nomura Y."/>
            <person name="Togiya S."/>
            <person name="Komai F."/>
            <person name="Hara R."/>
            <person name="Takeuchi K."/>
            <person name="Arita M."/>
            <person name="Imose N."/>
            <person name="Musashino K."/>
            <person name="Yuuki H."/>
            <person name="Oshima A."/>
            <person name="Sasaki N."/>
            <person name="Aotsuka S."/>
            <person name="Yoshikawa Y."/>
            <person name="Matsunawa H."/>
            <person name="Ichihara T."/>
            <person name="Shiohata N."/>
            <person name="Sano S."/>
            <person name="Moriya S."/>
            <person name="Momiyama H."/>
            <person name="Satoh N."/>
            <person name="Takami S."/>
            <person name="Terashima Y."/>
            <person name="Suzuki O."/>
            <person name="Nakagawa S."/>
            <person name="Senoh A."/>
            <person name="Mizoguchi H."/>
            <person name="Goto Y."/>
            <person name="Shimizu F."/>
            <person name="Wakebe H."/>
            <person name="Hishigaki H."/>
            <person name="Watanabe T."/>
            <person name="Sugiyama A."/>
            <person name="Takemoto M."/>
            <person name="Kawakami B."/>
            <person name="Yamazaki M."/>
            <person name="Watanabe K."/>
            <person name="Kumagai A."/>
            <person name="Itakura S."/>
            <person name="Fukuzumi Y."/>
            <person name="Fujimori Y."/>
            <person name="Komiyama M."/>
            <person name="Tashiro H."/>
            <person name="Tanigami A."/>
            <person name="Fujiwara T."/>
            <person name="Ono T."/>
            <person name="Yamada K."/>
            <person name="Fujii Y."/>
            <person name="Ozaki K."/>
            <person name="Hirao M."/>
            <person name="Ohmori Y."/>
            <person name="Kawabata A."/>
            <person name="Hikiji T."/>
            <person name="Kobatake N."/>
            <person name="Inagaki H."/>
            <person name="Ikema Y."/>
            <person name="Okamoto S."/>
            <person name="Okitani R."/>
            <person name="Kawakami T."/>
            <person name="Noguchi S."/>
            <person name="Itoh T."/>
            <person name="Shigeta K."/>
            <person name="Senba T."/>
            <person name="Matsumura K."/>
            <person name="Nakajima Y."/>
            <person name="Mizuno T."/>
            <person name="Morinaga M."/>
            <person name="Sasaki M."/>
            <person name="Togashi T."/>
            <person name="Oyama M."/>
            <person name="Hata H."/>
            <person name="Watanabe M."/>
            <person name="Komatsu T."/>
            <person name="Mizushima-Sugano J."/>
            <person name="Satoh T."/>
            <person name="Shirai Y."/>
            <person name="Takahashi Y."/>
            <person name="Nakagawa K."/>
            <person name="Okumura K."/>
            <person name="Nagase T."/>
            <person name="Nomura N."/>
            <person name="Kikuchi H."/>
            <person name="Masuho Y."/>
            <person name="Yamashita R."/>
            <person name="Nakai K."/>
            <person name="Yada T."/>
            <person name="Nakamura Y."/>
            <person name="Ohara O."/>
            <person name="Isogai T."/>
            <person name="Sugano S."/>
        </authorList>
    </citation>
    <scope>NUCLEOTIDE SEQUENCE [LARGE SCALE MRNA] (ISOFORM 1)</scope>
    <scope>VARIANT ARG-106</scope>
    <source>
        <tissue>Placenta</tissue>
    </source>
</reference>
<reference key="3">
    <citation type="journal article" date="2006" name="Nature">
        <title>Human chromosome 11 DNA sequence and analysis including novel gene identification.</title>
        <authorList>
            <person name="Taylor T.D."/>
            <person name="Noguchi H."/>
            <person name="Totoki Y."/>
            <person name="Toyoda A."/>
            <person name="Kuroki Y."/>
            <person name="Dewar K."/>
            <person name="Lloyd C."/>
            <person name="Itoh T."/>
            <person name="Takeda T."/>
            <person name="Kim D.-W."/>
            <person name="She X."/>
            <person name="Barlow K.F."/>
            <person name="Bloom T."/>
            <person name="Bruford E."/>
            <person name="Chang J.L."/>
            <person name="Cuomo C.A."/>
            <person name="Eichler E."/>
            <person name="FitzGerald M.G."/>
            <person name="Jaffe D.B."/>
            <person name="LaButti K."/>
            <person name="Nicol R."/>
            <person name="Park H.-S."/>
            <person name="Seaman C."/>
            <person name="Sougnez C."/>
            <person name="Yang X."/>
            <person name="Zimmer A.R."/>
            <person name="Zody M.C."/>
            <person name="Birren B.W."/>
            <person name="Nusbaum C."/>
            <person name="Fujiyama A."/>
            <person name="Hattori M."/>
            <person name="Rogers J."/>
            <person name="Lander E.S."/>
            <person name="Sakaki Y."/>
        </authorList>
    </citation>
    <scope>NUCLEOTIDE SEQUENCE [LARGE SCALE GENOMIC DNA]</scope>
</reference>
<reference key="4">
    <citation type="submission" date="2003-07" db="EMBL/GenBank/DDBJ databases">
        <authorList>
            <person name="Zhou G."/>
            <person name="Cao L."/>
            <person name="Yu R."/>
            <person name="Shen C."/>
            <person name="Li H."/>
            <person name="Zhong G."/>
            <person name="Lin L."/>
            <person name="Yang S."/>
        </authorList>
    </citation>
    <scope>NUCLEOTIDE SEQUENCE [LARGE SCALE MRNA] OF 1-87 (ISOFORM 1)</scope>
</reference>
<feature type="chain" id="PRO_0000183959" description="Synaptotagmin-8">
    <location>
        <begin position="1"/>
        <end position="387"/>
    </location>
</feature>
<feature type="topological domain" description="Extracellular" evidence="3">
    <location>
        <begin position="1"/>
        <end position="34"/>
    </location>
</feature>
<feature type="transmembrane region" description="Helical; Signal-anchor for type III membrane protein" evidence="3">
    <location>
        <begin position="35"/>
        <end position="55"/>
    </location>
</feature>
<feature type="topological domain" description="Cytoplasmic" evidence="3">
    <location>
        <begin position="56"/>
        <end position="387"/>
    </location>
</feature>
<feature type="domain" description="C2 1" evidence="4">
    <location>
        <begin position="103"/>
        <end position="219"/>
    </location>
</feature>
<feature type="domain" description="C2 2" evidence="4">
    <location>
        <begin position="231"/>
        <end position="346"/>
    </location>
</feature>
<feature type="region of interest" description="Disordered" evidence="5">
    <location>
        <begin position="70"/>
        <end position="99"/>
    </location>
</feature>
<feature type="splice variant" id="VSP_040846" description="In isoform 1." evidence="8 9 10">
    <original>IRVGLRQAADLRPGGTVDPYARVSVSTQAGHRHETKVHR</original>
    <variation>VKGPAAQDQRFCEFPERVTGEGQTPCPGWWGADRAGALG</variation>
    <location>
        <begin position="120"/>
        <end position="158"/>
    </location>
</feature>
<feature type="splice variant" id="VSP_040847" description="In isoform 1." evidence="8 9 10">
    <location>
        <begin position="159"/>
        <end position="387"/>
    </location>
</feature>
<feature type="sequence variant" id="VAR_061834" description="In dbSNP:rs57344881.">
    <original>H</original>
    <variation>Q</variation>
    <location>
        <position position="3"/>
    </location>
</feature>
<feature type="sequence variant" id="VAR_046952" description="In dbSNP:rs564271." evidence="6 7">
    <original>C</original>
    <variation>R</variation>
    <location>
        <position position="106"/>
    </location>
</feature>
<feature type="sequence variant" id="VAR_046953" description="In dbSNP:rs34141314.">
    <original>F</original>
    <variation>I</variation>
    <location>
        <position position="115"/>
    </location>
</feature>
<feature type="sequence conflict" description="In Ref. 4; AAQ57209." evidence="11" ref="4">
    <original>G</original>
    <variation>W</variation>
    <location>
        <position position="21"/>
    </location>
</feature>
<feature type="sequence conflict" description="In Ref. 1; CAB70885." evidence="11" ref="1">
    <location>
        <position position="32"/>
    </location>
</feature>
<feature type="sequence conflict" description="In Ref. 4; AAQ57209." evidence="11" ref="4">
    <original>C</original>
    <variation>R</variation>
    <location>
        <position position="57"/>
    </location>
</feature>
<feature type="sequence conflict" description="In Ref. 1; CAB70885." evidence="11" ref="1">
    <original>L</original>
    <variation>LV</variation>
    <location>
        <position position="86"/>
    </location>
</feature>
<feature type="sequence variant" id="VAR_082921" description="In dbSNP:rs907608." evidence="11">
    <original>R</original>
    <variation>Q</variation>
    <location sequence="Q8NBV8-1">
        <position position="129"/>
    </location>
</feature>
<feature type="sequence variant" id="VAR_082922" description="In dbSNP:rs907609." evidence="11">
    <original>T</original>
    <variation>M</variation>
    <location sequence="Q8NBV8-1">
        <position position="138"/>
    </location>
</feature>
<sequence length="387" mass="42433">MGHPPVSPSAPAPAGTTAIPGLIPDLVAGTPWPRWALIAGALAAGVLLVSCLLCAACCCCRRHRKKPRDKESVGLGSARGTTTTHLVQPDVDGLESSPGDAQQWGCLQLSLEFDFGSQEIRVGLRQAADLRPGGTVDPYARVSVSTQAGHRHETKVHRGTLCPVFDETCCFHIPQAELPGATLQVQLFNFKRFSGHEPLGELRLPLGTVDLQHVLEHWYLLGPPAATQPEQVGELCFSLRYVPSSGRLTVVVLEARGLRPGLAEPYVKVQLMLNQRKWKKRKTATKKGTAAPYFNEAFTFLVPFSQVQNVDLVLAVWDRSLPLRTEPVGKVHLGARASGQPLQHWADMLAHARRPIAQRHPLRPAREVDRMLALQPRLRLRLPLPHS</sequence>
<evidence type="ECO:0000250" key="1"/>
<evidence type="ECO:0000250" key="2">
    <source>
        <dbReference type="UniProtKB" id="Q9R0N6"/>
    </source>
</evidence>
<evidence type="ECO:0000255" key="3"/>
<evidence type="ECO:0000255" key="4">
    <source>
        <dbReference type="PROSITE-ProRule" id="PRU00041"/>
    </source>
</evidence>
<evidence type="ECO:0000256" key="5">
    <source>
        <dbReference type="SAM" id="MobiDB-lite"/>
    </source>
</evidence>
<evidence type="ECO:0000269" key="6">
    <source>
    </source>
</evidence>
<evidence type="ECO:0000269" key="7">
    <source>
    </source>
</evidence>
<evidence type="ECO:0000303" key="8">
    <source>
    </source>
</evidence>
<evidence type="ECO:0000303" key="9">
    <source>
    </source>
</evidence>
<evidence type="ECO:0000303" key="10">
    <source ref="4"/>
</evidence>
<evidence type="ECO:0000305" key="11"/>
<keyword id="KW-0025">Alternative splicing</keyword>
<keyword id="KW-1003">Cell membrane</keyword>
<keyword id="KW-0968">Cytoplasmic vesicle</keyword>
<keyword id="KW-0472">Membrane</keyword>
<keyword id="KW-1267">Proteomics identification</keyword>
<keyword id="KW-1185">Reference proteome</keyword>
<keyword id="KW-0677">Repeat</keyword>
<keyword id="KW-0735">Signal-anchor</keyword>
<keyword id="KW-0812">Transmembrane</keyword>
<keyword id="KW-1133">Transmembrane helix</keyword>
<accession>Q8NBV8</accession>
<accession>A6NCR4</accession>
<accession>A6NFJ4</accession>
<accession>Q9NSV9</accession>
<gene>
    <name type="primary">SYT8</name>
</gene>
<comment type="function">
    <text evidence="2">Involved in the trafficking and exocytosis of secretory vesicles in non-neuronal tissues. Mediates Ca(2+)-regulation of exocytosis acrosomal reaction in sperm. May mediate Ca(2+)-regulation of exocytosis in insulin secreted cells.</text>
</comment>
<comment type="subunit">
    <text evidence="2">Homodimer or homooligomer. Homodimerization and homooligomerization do not depend on Ca(2+). Interacts with SYNCRIP isoform 2 C-terminus. Binds inositol 1,3,4,5-tetrakisphosphate (IP4). Binds to AP2 in a Ca(2+)-independent manner. Interacts with STX1A, STX1B and STX2; the interaction is Ca(2+)-dependent.</text>
</comment>
<comment type="subcellular location">
    <subcellularLocation>
        <location evidence="1">Cell membrane</location>
        <topology evidence="1">Single-pass type III membrane protein</topology>
    </subcellularLocation>
    <subcellularLocation>
        <location evidence="2">Cytoplasmic vesicle</location>
        <location evidence="2">Secretory vesicle</location>
        <location evidence="2">Acrosome</location>
    </subcellularLocation>
</comment>
<comment type="alternative products">
    <event type="alternative splicing"/>
    <isoform>
        <id>Q8NBV8-4</id>
        <name>4</name>
        <sequence type="displayed"/>
    </isoform>
    <isoform>
        <id>Q8NBV8-1</id>
        <name>1</name>
        <sequence type="described" ref="VSP_040846 VSP_040847"/>
    </isoform>
</comment>
<comment type="domain">
    <text evidence="1">The first C2 domain/C2A does not mediate Ca(2+)-dependent phospholipid binding.</text>
</comment>
<comment type="domain">
    <text evidence="1">The second C2 domain/C2B is responsible for SYNCRIP and inositol 1,3,4,5-tetrakisphosphate (IP4)-binding.</text>
</comment>
<comment type="similarity">
    <text evidence="11">Belongs to the synaptotagmin family.</text>
</comment>
<comment type="sequence caution" evidence="11">
    <conflict type="miscellaneous discrepancy">
        <sequence resource="EMBL-CDS" id="AAQ57209"/>
    </conflict>
    <text>May be due to an intron retention.</text>
</comment>
<comment type="sequence caution" evidence="11">
    <conflict type="erroneous initiation">
        <sequence resource="EMBL-CDS" id="BAC11467"/>
    </conflict>
    <text>Extended N-terminus.</text>
</comment>
<comment type="sequence caution" evidence="11">
    <conflict type="miscellaneous discrepancy">
        <sequence resource="EMBL-CDS" id="CAB70885"/>
    </conflict>
    <text>The sequence differs from that shown because it is a pre-mRNA.</text>
</comment>
<organism>
    <name type="scientific">Homo sapiens</name>
    <name type="common">Human</name>
    <dbReference type="NCBI Taxonomy" id="9606"/>
    <lineage>
        <taxon>Eukaryota</taxon>
        <taxon>Metazoa</taxon>
        <taxon>Chordata</taxon>
        <taxon>Craniata</taxon>
        <taxon>Vertebrata</taxon>
        <taxon>Euteleostomi</taxon>
        <taxon>Mammalia</taxon>
        <taxon>Eutheria</taxon>
        <taxon>Euarchontoglires</taxon>
        <taxon>Primates</taxon>
        <taxon>Haplorrhini</taxon>
        <taxon>Catarrhini</taxon>
        <taxon>Hominidae</taxon>
        <taxon>Homo</taxon>
    </lineage>
</organism>
<proteinExistence type="evidence at protein level"/>
<dbReference type="EMBL" id="AL137708">
    <property type="protein sequence ID" value="CAB70885.2"/>
    <property type="status" value="ALT_SEQ"/>
    <property type="molecule type" value="Transcribed_RNA"/>
</dbReference>
<dbReference type="EMBL" id="AK075202">
    <property type="protein sequence ID" value="BAC11467.1"/>
    <property type="status" value="ALT_INIT"/>
    <property type="molecule type" value="mRNA"/>
</dbReference>
<dbReference type="EMBL" id="AC051649">
    <property type="status" value="NOT_ANNOTATED_CDS"/>
    <property type="molecule type" value="Genomic_DNA"/>
</dbReference>
<dbReference type="EMBL" id="AY353087">
    <property type="protein sequence ID" value="AAQ57209.1"/>
    <property type="status" value="ALT_SEQ"/>
    <property type="molecule type" value="mRNA"/>
</dbReference>
<dbReference type="CCDS" id="CCDS91401.1">
    <molecule id="Q8NBV8-4"/>
</dbReference>
<dbReference type="PIR" id="T46410">
    <property type="entry name" value="T46410"/>
</dbReference>
<dbReference type="RefSeq" id="NP_001381001.1">
    <molecule id="Q8NBV8-4"/>
    <property type="nucleotide sequence ID" value="NM_001394072.1"/>
</dbReference>
<dbReference type="RefSeq" id="NP_612634.3">
    <property type="nucleotide sequence ID" value="NM_138567.4"/>
</dbReference>
<dbReference type="RefSeq" id="XP_011518757.2">
    <molecule id="Q8NBV8-4"/>
    <property type="nucleotide sequence ID" value="XM_011520455.2"/>
</dbReference>
<dbReference type="RefSeq" id="XP_011518759.1">
    <property type="nucleotide sequence ID" value="XM_011520457.2"/>
</dbReference>
<dbReference type="RefSeq" id="XP_016874017.2">
    <molecule id="Q8NBV8-4"/>
    <property type="nucleotide sequence ID" value="XM_017018528.2"/>
</dbReference>
<dbReference type="RefSeq" id="XP_016874018.1">
    <property type="nucleotide sequence ID" value="XM_017018529.1"/>
</dbReference>
<dbReference type="RefSeq" id="XP_054188445.1">
    <molecule id="Q8NBV8-4"/>
    <property type="nucleotide sequence ID" value="XM_054332470.1"/>
</dbReference>
<dbReference type="RefSeq" id="XP_054188446.1">
    <molecule id="Q8NBV8-4"/>
    <property type="nucleotide sequence ID" value="XM_054332471.1"/>
</dbReference>
<dbReference type="SMR" id="Q8NBV8"/>
<dbReference type="BioGRID" id="124654">
    <property type="interactions" value="1"/>
</dbReference>
<dbReference type="FunCoup" id="Q8NBV8">
    <property type="interactions" value="7"/>
</dbReference>
<dbReference type="STRING" id="9606.ENSP00000371394"/>
<dbReference type="PhosphoSitePlus" id="Q8NBV8"/>
<dbReference type="SwissPalm" id="Q8NBV8"/>
<dbReference type="BioMuta" id="SYT8"/>
<dbReference type="DMDM" id="327478607"/>
<dbReference type="MassIVE" id="Q8NBV8"/>
<dbReference type="PaxDb" id="9606-ENSP00000371394"/>
<dbReference type="PeptideAtlas" id="Q8NBV8"/>
<dbReference type="ProteomicsDB" id="72828">
    <molecule id="Q8NBV8-4"/>
</dbReference>
<dbReference type="ProteomicsDB" id="72829">
    <molecule id="Q8NBV8-1"/>
</dbReference>
<dbReference type="ProteomicsDB" id="857"/>
<dbReference type="Antibodypedia" id="55775">
    <property type="antibodies" value="93 antibodies from 22 providers"/>
</dbReference>
<dbReference type="DNASU" id="90019"/>
<dbReference type="Ensembl" id="ENST00000341958.4">
    <molecule id="Q8NBV8-4"/>
    <property type="protein sequence ID" value="ENSP00000343691.3"/>
    <property type="gene ID" value="ENSG00000149043.17"/>
</dbReference>
<dbReference type="Ensembl" id="ENST00000673308.1">
    <molecule id="Q8NBV8-4"/>
    <property type="protein sequence ID" value="ENSP00000499974.1"/>
    <property type="gene ID" value="ENSG00000288149.1"/>
</dbReference>
<dbReference type="GeneID" id="90019"/>
<dbReference type="KEGG" id="hsa:90019"/>
<dbReference type="MANE-Select" id="ENST00000341958.4">
    <property type="protein sequence ID" value="ENSP00000343691.3"/>
    <property type="RefSeq nucleotide sequence ID" value="NM_001394072.1"/>
    <property type="RefSeq protein sequence ID" value="NP_001381001.1"/>
</dbReference>
<dbReference type="UCSC" id="uc001lue.2">
    <molecule id="Q8NBV8-4"/>
    <property type="organism name" value="human"/>
</dbReference>
<dbReference type="AGR" id="HGNC:19264"/>
<dbReference type="CTD" id="90019"/>
<dbReference type="DisGeNET" id="90019"/>
<dbReference type="GeneCards" id="SYT8"/>
<dbReference type="HGNC" id="HGNC:19264">
    <property type="gene designation" value="SYT8"/>
</dbReference>
<dbReference type="HPA" id="ENSG00000149043">
    <property type="expression patterns" value="Tissue enhanced (esophagus, skin, urinary bladder)"/>
</dbReference>
<dbReference type="MIM" id="607719">
    <property type="type" value="gene"/>
</dbReference>
<dbReference type="neXtProt" id="NX_Q8NBV8"/>
<dbReference type="OpenTargets" id="ENSG00000149043"/>
<dbReference type="PharmGKB" id="PA134993261"/>
<dbReference type="VEuPathDB" id="HostDB:ENSG00000149043"/>
<dbReference type="eggNOG" id="KOG1028">
    <property type="taxonomic scope" value="Eukaryota"/>
</dbReference>
<dbReference type="GeneTree" id="ENSGT00940000160892"/>
<dbReference type="HOGENOM" id="CLU_023008_0_1_1"/>
<dbReference type="InParanoid" id="Q8NBV8"/>
<dbReference type="OMA" id="ECWYQLG"/>
<dbReference type="OrthoDB" id="67700at2759"/>
<dbReference type="PAN-GO" id="Q8NBV8">
    <property type="GO annotations" value="15 GO annotations based on evolutionary models"/>
</dbReference>
<dbReference type="PhylomeDB" id="Q8NBV8"/>
<dbReference type="TreeFam" id="TF315600"/>
<dbReference type="PathwayCommons" id="Q8NBV8"/>
<dbReference type="Reactome" id="R-HSA-8856825">
    <property type="pathway name" value="Cargo recognition for clathrin-mediated endocytosis"/>
</dbReference>
<dbReference type="Reactome" id="R-HSA-8856828">
    <property type="pathway name" value="Clathrin-mediated endocytosis"/>
</dbReference>
<dbReference type="SignaLink" id="Q8NBV8"/>
<dbReference type="BioGRID-ORCS" id="90019">
    <property type="hits" value="22 hits in 1141 CRISPR screens"/>
</dbReference>
<dbReference type="GenomeRNAi" id="90019"/>
<dbReference type="Pharos" id="Q8NBV8">
    <property type="development level" value="Tbio"/>
</dbReference>
<dbReference type="PRO" id="PR:Q8NBV8"/>
<dbReference type="Proteomes" id="UP000005640">
    <property type="component" value="Chromosome 11"/>
</dbReference>
<dbReference type="RNAct" id="Q8NBV8">
    <property type="molecule type" value="protein"/>
</dbReference>
<dbReference type="Bgee" id="ENSG00000149043">
    <property type="expression patterns" value="Expressed in skin of leg and 86 other cell types or tissues"/>
</dbReference>
<dbReference type="ExpressionAtlas" id="Q8NBV8">
    <property type="expression patterns" value="baseline and differential"/>
</dbReference>
<dbReference type="GO" id="GO:0001669">
    <property type="term" value="C:acrosomal vesicle"/>
    <property type="evidence" value="ECO:0007669"/>
    <property type="project" value="UniProtKB-SubCell"/>
</dbReference>
<dbReference type="GO" id="GO:0030424">
    <property type="term" value="C:axon"/>
    <property type="evidence" value="ECO:0000318"/>
    <property type="project" value="GO_Central"/>
</dbReference>
<dbReference type="GO" id="GO:0031045">
    <property type="term" value="C:dense core granule"/>
    <property type="evidence" value="ECO:0000318"/>
    <property type="project" value="GO_Central"/>
</dbReference>
<dbReference type="GO" id="GO:0070382">
    <property type="term" value="C:exocytic vesicle"/>
    <property type="evidence" value="ECO:0000318"/>
    <property type="project" value="GO_Central"/>
</dbReference>
<dbReference type="GO" id="GO:0005886">
    <property type="term" value="C:plasma membrane"/>
    <property type="evidence" value="ECO:0000318"/>
    <property type="project" value="GO_Central"/>
</dbReference>
<dbReference type="GO" id="GO:0030672">
    <property type="term" value="C:synaptic vesicle membrane"/>
    <property type="evidence" value="ECO:0000318"/>
    <property type="project" value="GO_Central"/>
</dbReference>
<dbReference type="GO" id="GO:0061891">
    <property type="term" value="F:calcium ion sensor activity"/>
    <property type="evidence" value="ECO:0000318"/>
    <property type="project" value="GO_Central"/>
</dbReference>
<dbReference type="GO" id="GO:0005544">
    <property type="term" value="F:calcium-dependent phospholipid binding"/>
    <property type="evidence" value="ECO:0000318"/>
    <property type="project" value="GO_Central"/>
</dbReference>
<dbReference type="GO" id="GO:0048306">
    <property type="term" value="F:calcium-dependent protein binding"/>
    <property type="evidence" value="ECO:0007669"/>
    <property type="project" value="Ensembl"/>
</dbReference>
<dbReference type="GO" id="GO:0000149">
    <property type="term" value="F:SNARE binding"/>
    <property type="evidence" value="ECO:0000318"/>
    <property type="project" value="GO_Central"/>
</dbReference>
<dbReference type="GO" id="GO:0007340">
    <property type="term" value="P:acrosome reaction"/>
    <property type="evidence" value="ECO:0007669"/>
    <property type="project" value="Ensembl"/>
</dbReference>
<dbReference type="GO" id="GO:0099502">
    <property type="term" value="P:calcium-dependent activation of synaptic vesicle fusion"/>
    <property type="evidence" value="ECO:0000318"/>
    <property type="project" value="GO_Central"/>
</dbReference>
<dbReference type="GO" id="GO:0017158">
    <property type="term" value="P:regulation of calcium ion-dependent exocytosis"/>
    <property type="evidence" value="ECO:0000318"/>
    <property type="project" value="GO_Central"/>
</dbReference>
<dbReference type="GO" id="GO:2000300">
    <property type="term" value="P:regulation of synaptic vesicle exocytosis"/>
    <property type="evidence" value="ECO:0000318"/>
    <property type="project" value="GO_Central"/>
</dbReference>
<dbReference type="GO" id="GO:0016192">
    <property type="term" value="P:vesicle-mediated transport"/>
    <property type="evidence" value="ECO:0000318"/>
    <property type="project" value="GO_Central"/>
</dbReference>
<dbReference type="FunFam" id="2.60.40.150:FF:000176">
    <property type="entry name" value="Synaptotagmin 8"/>
    <property type="match status" value="1"/>
</dbReference>
<dbReference type="FunFam" id="2.60.40.150:FF:000182">
    <property type="entry name" value="Synaptotagmin 8"/>
    <property type="match status" value="1"/>
</dbReference>
<dbReference type="Gene3D" id="2.60.40.150">
    <property type="entry name" value="C2 domain"/>
    <property type="match status" value="2"/>
</dbReference>
<dbReference type="InterPro" id="IPR000008">
    <property type="entry name" value="C2_dom"/>
</dbReference>
<dbReference type="InterPro" id="IPR035892">
    <property type="entry name" value="C2_domain_sf"/>
</dbReference>
<dbReference type="InterPro" id="IPR001565">
    <property type="entry name" value="Synaptotagmin"/>
</dbReference>
<dbReference type="PANTHER" id="PTHR10024">
    <property type="entry name" value="SYNAPTOTAGMIN"/>
    <property type="match status" value="1"/>
</dbReference>
<dbReference type="PANTHER" id="PTHR10024:SF249">
    <property type="entry name" value="SYNAPTOTAGMIN-8"/>
    <property type="match status" value="1"/>
</dbReference>
<dbReference type="Pfam" id="PF00168">
    <property type="entry name" value="C2"/>
    <property type="match status" value="2"/>
</dbReference>
<dbReference type="PRINTS" id="PR00399">
    <property type="entry name" value="SYNAPTOTAGMN"/>
</dbReference>
<dbReference type="SMART" id="SM00239">
    <property type="entry name" value="C2"/>
    <property type="match status" value="2"/>
</dbReference>
<dbReference type="SUPFAM" id="SSF49562">
    <property type="entry name" value="C2 domain (Calcium/lipid-binding domain, CaLB)"/>
    <property type="match status" value="2"/>
</dbReference>
<dbReference type="PROSITE" id="PS50004">
    <property type="entry name" value="C2"/>
    <property type="match status" value="2"/>
</dbReference>
<protein>
    <recommendedName>
        <fullName>Synaptotagmin-8</fullName>
    </recommendedName>
    <alternativeName>
        <fullName>Synaptotagmin VIII</fullName>
        <shortName>SytVIII</shortName>
    </alternativeName>
</protein>